<proteinExistence type="inferred from homology"/>
<gene>
    <name evidence="1" type="primary">hisS</name>
    <name type="ordered locus">RD1_4065</name>
</gene>
<organism>
    <name type="scientific">Roseobacter denitrificans (strain ATCC 33942 / OCh 114)</name>
    <name type="common">Erythrobacter sp. (strain OCh 114)</name>
    <name type="synonym">Roseobacter denitrificans</name>
    <dbReference type="NCBI Taxonomy" id="375451"/>
    <lineage>
        <taxon>Bacteria</taxon>
        <taxon>Pseudomonadati</taxon>
        <taxon>Pseudomonadota</taxon>
        <taxon>Alphaproteobacteria</taxon>
        <taxon>Rhodobacterales</taxon>
        <taxon>Roseobacteraceae</taxon>
        <taxon>Roseobacter</taxon>
    </lineage>
</organism>
<keyword id="KW-0030">Aminoacyl-tRNA synthetase</keyword>
<keyword id="KW-0067">ATP-binding</keyword>
<keyword id="KW-0963">Cytoplasm</keyword>
<keyword id="KW-0436">Ligase</keyword>
<keyword id="KW-0547">Nucleotide-binding</keyword>
<keyword id="KW-0648">Protein biosynthesis</keyword>
<keyword id="KW-1185">Reference proteome</keyword>
<dbReference type="EC" id="6.1.1.21" evidence="1"/>
<dbReference type="EMBL" id="CP000362">
    <property type="protein sequence ID" value="ABG33509.1"/>
    <property type="molecule type" value="Genomic_DNA"/>
</dbReference>
<dbReference type="RefSeq" id="WP_011570119.1">
    <property type="nucleotide sequence ID" value="NC_008209.1"/>
</dbReference>
<dbReference type="SMR" id="Q160T4"/>
<dbReference type="STRING" id="375451.RD1_4065"/>
<dbReference type="KEGG" id="rde:RD1_4065"/>
<dbReference type="eggNOG" id="COG0124">
    <property type="taxonomic scope" value="Bacteria"/>
</dbReference>
<dbReference type="HOGENOM" id="CLU_025113_3_2_5"/>
<dbReference type="OrthoDB" id="9800814at2"/>
<dbReference type="Proteomes" id="UP000007029">
    <property type="component" value="Chromosome"/>
</dbReference>
<dbReference type="GO" id="GO:0005737">
    <property type="term" value="C:cytoplasm"/>
    <property type="evidence" value="ECO:0007669"/>
    <property type="project" value="UniProtKB-SubCell"/>
</dbReference>
<dbReference type="GO" id="GO:0005524">
    <property type="term" value="F:ATP binding"/>
    <property type="evidence" value="ECO:0007669"/>
    <property type="project" value="UniProtKB-UniRule"/>
</dbReference>
<dbReference type="GO" id="GO:0004821">
    <property type="term" value="F:histidine-tRNA ligase activity"/>
    <property type="evidence" value="ECO:0007669"/>
    <property type="project" value="UniProtKB-UniRule"/>
</dbReference>
<dbReference type="GO" id="GO:0006427">
    <property type="term" value="P:histidyl-tRNA aminoacylation"/>
    <property type="evidence" value="ECO:0007669"/>
    <property type="project" value="UniProtKB-UniRule"/>
</dbReference>
<dbReference type="CDD" id="cd00773">
    <property type="entry name" value="HisRS-like_core"/>
    <property type="match status" value="1"/>
</dbReference>
<dbReference type="CDD" id="cd00859">
    <property type="entry name" value="HisRS_anticodon"/>
    <property type="match status" value="1"/>
</dbReference>
<dbReference type="Gene3D" id="3.40.50.800">
    <property type="entry name" value="Anticodon-binding domain"/>
    <property type="match status" value="1"/>
</dbReference>
<dbReference type="Gene3D" id="3.30.930.10">
    <property type="entry name" value="Bira Bifunctional Protein, Domain 2"/>
    <property type="match status" value="1"/>
</dbReference>
<dbReference type="HAMAP" id="MF_00127">
    <property type="entry name" value="His_tRNA_synth"/>
    <property type="match status" value="1"/>
</dbReference>
<dbReference type="InterPro" id="IPR006195">
    <property type="entry name" value="aa-tRNA-synth_II"/>
</dbReference>
<dbReference type="InterPro" id="IPR045864">
    <property type="entry name" value="aa-tRNA-synth_II/BPL/LPL"/>
</dbReference>
<dbReference type="InterPro" id="IPR004154">
    <property type="entry name" value="Anticodon-bd"/>
</dbReference>
<dbReference type="InterPro" id="IPR036621">
    <property type="entry name" value="Anticodon-bd_dom_sf"/>
</dbReference>
<dbReference type="InterPro" id="IPR015807">
    <property type="entry name" value="His-tRNA-ligase"/>
</dbReference>
<dbReference type="InterPro" id="IPR041715">
    <property type="entry name" value="HisRS-like_core"/>
</dbReference>
<dbReference type="InterPro" id="IPR004516">
    <property type="entry name" value="HisRS/HisZ"/>
</dbReference>
<dbReference type="InterPro" id="IPR033656">
    <property type="entry name" value="HisRS_anticodon"/>
</dbReference>
<dbReference type="NCBIfam" id="TIGR00442">
    <property type="entry name" value="hisS"/>
    <property type="match status" value="1"/>
</dbReference>
<dbReference type="PANTHER" id="PTHR11476:SF7">
    <property type="entry name" value="HISTIDINE--TRNA LIGASE"/>
    <property type="match status" value="1"/>
</dbReference>
<dbReference type="PANTHER" id="PTHR11476">
    <property type="entry name" value="HISTIDYL-TRNA SYNTHETASE"/>
    <property type="match status" value="1"/>
</dbReference>
<dbReference type="Pfam" id="PF03129">
    <property type="entry name" value="HGTP_anticodon"/>
    <property type="match status" value="1"/>
</dbReference>
<dbReference type="Pfam" id="PF13393">
    <property type="entry name" value="tRNA-synt_His"/>
    <property type="match status" value="1"/>
</dbReference>
<dbReference type="PIRSF" id="PIRSF001549">
    <property type="entry name" value="His-tRNA_synth"/>
    <property type="match status" value="1"/>
</dbReference>
<dbReference type="SUPFAM" id="SSF52954">
    <property type="entry name" value="Class II aaRS ABD-related"/>
    <property type="match status" value="1"/>
</dbReference>
<dbReference type="SUPFAM" id="SSF55681">
    <property type="entry name" value="Class II aaRS and biotin synthetases"/>
    <property type="match status" value="1"/>
</dbReference>
<dbReference type="PROSITE" id="PS50862">
    <property type="entry name" value="AA_TRNA_LIGASE_II"/>
    <property type="match status" value="1"/>
</dbReference>
<comment type="catalytic activity">
    <reaction evidence="1">
        <text>tRNA(His) + L-histidine + ATP = L-histidyl-tRNA(His) + AMP + diphosphate + H(+)</text>
        <dbReference type="Rhea" id="RHEA:17313"/>
        <dbReference type="Rhea" id="RHEA-COMP:9665"/>
        <dbReference type="Rhea" id="RHEA-COMP:9689"/>
        <dbReference type="ChEBI" id="CHEBI:15378"/>
        <dbReference type="ChEBI" id="CHEBI:30616"/>
        <dbReference type="ChEBI" id="CHEBI:33019"/>
        <dbReference type="ChEBI" id="CHEBI:57595"/>
        <dbReference type="ChEBI" id="CHEBI:78442"/>
        <dbReference type="ChEBI" id="CHEBI:78527"/>
        <dbReference type="ChEBI" id="CHEBI:456215"/>
        <dbReference type="EC" id="6.1.1.21"/>
    </reaction>
</comment>
<comment type="subunit">
    <text evidence="1">Homodimer.</text>
</comment>
<comment type="subcellular location">
    <subcellularLocation>
        <location evidence="1">Cytoplasm</location>
    </subcellularLocation>
</comment>
<comment type="similarity">
    <text evidence="1">Belongs to the class-II aminoacyl-tRNA synthetase family.</text>
</comment>
<name>SYH_ROSDO</name>
<sequence>MAKPKKTPRPKAQTPKGFRDYFGAEVSQRAEMLQRIAGVYHRYGFDALESSGVETVEALGKFLPDVDRPNEGVFAWQEDADADKPGDWLALRYDLTAPLARVYAQHQNDLPKPYRRYAMGPVWRNEKPGPGRFRQFYQCDADTVGASSVAADAEICAMLCDCLEAVGIERGDYVVRINNRKVLNGVLEVIGALGDEPRLSQHFQEMAENLGKKMTAAKVGIVLRTIDKLDRLGKEGVRSLLGPGRKDESGDLTFGADLSKAQIDVVMSFLEAKGGTNSETLINLREIVGRSRIGKEGVDELEKISELLSAGSYGPDRIVIDPSVVRGLGYYTGPVYEAELTFEIQDDKGRTRNFGSVAGGGRYDDLVKRFTGQEVPATGVSIGVDRLLAALHAKGRLDTTDVGPVVVTVMDRDRMADYQAMVAELRQAGIRAEVYLGNPKNFGNQLKYADTRNSPVAVIEGGDEHEKGVVQIKDLILGAEIAKSATLEEWKDRPSQFEVPRAELVAKVREILAQHGLEK</sequence>
<evidence type="ECO:0000255" key="1">
    <source>
        <dbReference type="HAMAP-Rule" id="MF_00127"/>
    </source>
</evidence>
<reference key="1">
    <citation type="journal article" date="2007" name="J. Bacteriol.">
        <title>The complete genome sequence of Roseobacter denitrificans reveals a mixotrophic rather than photosynthetic metabolism.</title>
        <authorList>
            <person name="Swingley W.D."/>
            <person name="Sadekar S."/>
            <person name="Mastrian S.D."/>
            <person name="Matthies H.J."/>
            <person name="Hao J."/>
            <person name="Ramos H."/>
            <person name="Acharya C.R."/>
            <person name="Conrad A.L."/>
            <person name="Taylor H.L."/>
            <person name="Dejesa L.C."/>
            <person name="Shah M.K."/>
            <person name="O'Huallachain M.E."/>
            <person name="Lince M.T."/>
            <person name="Blankenship R.E."/>
            <person name="Beatty J.T."/>
            <person name="Touchman J.W."/>
        </authorList>
    </citation>
    <scope>NUCLEOTIDE SEQUENCE [LARGE SCALE GENOMIC DNA]</scope>
    <source>
        <strain>ATCC 33942 / OCh 114</strain>
    </source>
</reference>
<accession>Q160T4</accession>
<feature type="chain" id="PRO_1000016438" description="Histidine--tRNA ligase">
    <location>
        <begin position="1"/>
        <end position="519"/>
    </location>
</feature>
<protein>
    <recommendedName>
        <fullName evidence="1">Histidine--tRNA ligase</fullName>
        <ecNumber evidence="1">6.1.1.21</ecNumber>
    </recommendedName>
    <alternativeName>
        <fullName evidence="1">Histidyl-tRNA synthetase</fullName>
        <shortName evidence="1">HisRS</shortName>
    </alternativeName>
</protein>